<dbReference type="EMBL" id="X52586">
    <property type="protein sequence ID" value="CAA36821.1"/>
    <property type="molecule type" value="Genomic_DNA"/>
</dbReference>
<dbReference type="PIR" id="S15064">
    <property type="entry name" value="S15064"/>
</dbReference>
<name>YALA_TRYBB</name>
<accession>P17961</accession>
<reference key="1">
    <citation type="journal article" date="1990" name="Nucleic Acids Res.">
        <title>The genes encoding fructose bisphosphate aldolase in Trypanosoma brucei are interspersed with unrelated genes.</title>
        <authorList>
            <person name="Vijayasarathy S."/>
            <person name="Ernest I."/>
            <person name="Itzhaki J."/>
            <person name="Sherman D."/>
            <person name="Mowatt M.R."/>
            <person name="Michels P.A.M."/>
            <person name="Clayton C.E."/>
        </authorList>
    </citation>
    <scope>NUCLEOTIDE SEQUENCE [GENOMIC DNA]</scope>
    <source>
        <strain>427</strain>
    </source>
</reference>
<organism>
    <name type="scientific">Trypanosoma brucei brucei</name>
    <dbReference type="NCBI Taxonomy" id="5702"/>
    <lineage>
        <taxon>Eukaryota</taxon>
        <taxon>Discoba</taxon>
        <taxon>Euglenozoa</taxon>
        <taxon>Kinetoplastea</taxon>
        <taxon>Metakinetoplastina</taxon>
        <taxon>Trypanosomatida</taxon>
        <taxon>Trypanosomatidae</taxon>
        <taxon>Trypanosoma</taxon>
    </lineage>
</organism>
<sequence>MSKRVEVLLTQLPRPTA</sequence>
<feature type="chain" id="PRO_0000066118" description="Uncharacterized 1.9 kDa protein in aldolase locus">
    <location>
        <begin position="1"/>
        <end position="17"/>
    </location>
</feature>
<protein>
    <recommendedName>
        <fullName>Uncharacterized 1.9 kDa protein in aldolase locus</fullName>
    </recommendedName>
    <alternativeName>
        <fullName>ORFA</fullName>
    </alternativeName>
</protein>
<proteinExistence type="predicted"/>